<organism>
    <name type="scientific">Methylococcus capsulatus (strain ATCC 33009 / NCIMB 11132 / Bath)</name>
    <dbReference type="NCBI Taxonomy" id="243233"/>
    <lineage>
        <taxon>Bacteria</taxon>
        <taxon>Pseudomonadati</taxon>
        <taxon>Pseudomonadota</taxon>
        <taxon>Gammaproteobacteria</taxon>
        <taxon>Methylococcales</taxon>
        <taxon>Methylococcaceae</taxon>
        <taxon>Methylococcus</taxon>
    </lineage>
</organism>
<feature type="chain" id="PRO_1000019416" description="Cysteine desulfurase IscS">
    <location>
        <begin position="1"/>
        <end position="403"/>
    </location>
</feature>
<feature type="active site" description="Cysteine persulfide intermediate" evidence="1">
    <location>
        <position position="326"/>
    </location>
</feature>
<feature type="binding site" evidence="1">
    <location>
        <begin position="73"/>
        <end position="74"/>
    </location>
    <ligand>
        <name>pyridoxal 5'-phosphate</name>
        <dbReference type="ChEBI" id="CHEBI:597326"/>
    </ligand>
</feature>
<feature type="binding site" evidence="1">
    <location>
        <position position="153"/>
    </location>
    <ligand>
        <name>pyridoxal 5'-phosphate</name>
        <dbReference type="ChEBI" id="CHEBI:597326"/>
    </ligand>
</feature>
<feature type="binding site" evidence="1">
    <location>
        <position position="181"/>
    </location>
    <ligand>
        <name>pyridoxal 5'-phosphate</name>
        <dbReference type="ChEBI" id="CHEBI:597326"/>
    </ligand>
</feature>
<feature type="binding site" evidence="1">
    <location>
        <begin position="201"/>
        <end position="203"/>
    </location>
    <ligand>
        <name>pyridoxal 5'-phosphate</name>
        <dbReference type="ChEBI" id="CHEBI:597326"/>
    </ligand>
</feature>
<feature type="binding site" evidence="1">
    <location>
        <position position="241"/>
    </location>
    <ligand>
        <name>pyridoxal 5'-phosphate</name>
        <dbReference type="ChEBI" id="CHEBI:597326"/>
    </ligand>
</feature>
<feature type="binding site" description="via persulfide group" evidence="1">
    <location>
        <position position="326"/>
    </location>
    <ligand>
        <name>[2Fe-2S] cluster</name>
        <dbReference type="ChEBI" id="CHEBI:190135"/>
        <note>ligand shared with IscU</note>
    </ligand>
</feature>
<feature type="modified residue" description="N6-(pyridoxal phosphate)lysine" evidence="1">
    <location>
        <position position="204"/>
    </location>
</feature>
<gene>
    <name evidence="1" type="primary">iscS</name>
    <name type="ordered locus">MCA0247</name>
</gene>
<name>ISCS_METCA</name>
<dbReference type="EC" id="2.8.1.7" evidence="1"/>
<dbReference type="EMBL" id="AE017282">
    <property type="protein sequence ID" value="AAU90595.1"/>
    <property type="molecule type" value="Genomic_DNA"/>
</dbReference>
<dbReference type="RefSeq" id="WP_010959611.1">
    <property type="nucleotide sequence ID" value="NC_002977.6"/>
</dbReference>
<dbReference type="SMR" id="Q60C64"/>
<dbReference type="STRING" id="243233.MCA0247"/>
<dbReference type="GeneID" id="88222591"/>
<dbReference type="KEGG" id="mca:MCA0247"/>
<dbReference type="eggNOG" id="COG1104">
    <property type="taxonomic scope" value="Bacteria"/>
</dbReference>
<dbReference type="HOGENOM" id="CLU_003433_0_2_6"/>
<dbReference type="UniPathway" id="UPA00266"/>
<dbReference type="Proteomes" id="UP000006821">
    <property type="component" value="Chromosome"/>
</dbReference>
<dbReference type="GO" id="GO:1990221">
    <property type="term" value="C:L-cysteine desulfurase complex"/>
    <property type="evidence" value="ECO:0007669"/>
    <property type="project" value="UniProtKB-ARBA"/>
</dbReference>
<dbReference type="GO" id="GO:0051537">
    <property type="term" value="F:2 iron, 2 sulfur cluster binding"/>
    <property type="evidence" value="ECO:0007669"/>
    <property type="project" value="UniProtKB-UniRule"/>
</dbReference>
<dbReference type="GO" id="GO:0031071">
    <property type="term" value="F:cysteine desulfurase activity"/>
    <property type="evidence" value="ECO:0007669"/>
    <property type="project" value="UniProtKB-UniRule"/>
</dbReference>
<dbReference type="GO" id="GO:0046872">
    <property type="term" value="F:metal ion binding"/>
    <property type="evidence" value="ECO:0007669"/>
    <property type="project" value="UniProtKB-KW"/>
</dbReference>
<dbReference type="GO" id="GO:0030170">
    <property type="term" value="F:pyridoxal phosphate binding"/>
    <property type="evidence" value="ECO:0007669"/>
    <property type="project" value="UniProtKB-UniRule"/>
</dbReference>
<dbReference type="GO" id="GO:0044571">
    <property type="term" value="P:[2Fe-2S] cluster assembly"/>
    <property type="evidence" value="ECO:0007669"/>
    <property type="project" value="UniProtKB-UniRule"/>
</dbReference>
<dbReference type="FunFam" id="3.40.640.10:FF:000003">
    <property type="entry name" value="Cysteine desulfurase IscS"/>
    <property type="match status" value="1"/>
</dbReference>
<dbReference type="FunFam" id="3.90.1150.10:FF:000002">
    <property type="entry name" value="Cysteine desulfurase IscS"/>
    <property type="match status" value="1"/>
</dbReference>
<dbReference type="Gene3D" id="3.90.1150.10">
    <property type="entry name" value="Aspartate Aminotransferase, domain 1"/>
    <property type="match status" value="1"/>
</dbReference>
<dbReference type="Gene3D" id="3.40.640.10">
    <property type="entry name" value="Type I PLP-dependent aspartate aminotransferase-like (Major domain)"/>
    <property type="match status" value="1"/>
</dbReference>
<dbReference type="HAMAP" id="MF_00331">
    <property type="entry name" value="Cys_desulf_IscS"/>
    <property type="match status" value="1"/>
</dbReference>
<dbReference type="InterPro" id="IPR000192">
    <property type="entry name" value="Aminotrans_V_dom"/>
</dbReference>
<dbReference type="InterPro" id="IPR020578">
    <property type="entry name" value="Aminotrans_V_PyrdxlP_BS"/>
</dbReference>
<dbReference type="InterPro" id="IPR010240">
    <property type="entry name" value="Cys_deSase_IscS"/>
</dbReference>
<dbReference type="InterPro" id="IPR016454">
    <property type="entry name" value="Cysteine_dSase"/>
</dbReference>
<dbReference type="InterPro" id="IPR015424">
    <property type="entry name" value="PyrdxlP-dep_Trfase"/>
</dbReference>
<dbReference type="InterPro" id="IPR015421">
    <property type="entry name" value="PyrdxlP-dep_Trfase_major"/>
</dbReference>
<dbReference type="InterPro" id="IPR015422">
    <property type="entry name" value="PyrdxlP-dep_Trfase_small"/>
</dbReference>
<dbReference type="NCBIfam" id="TIGR02006">
    <property type="entry name" value="IscS"/>
    <property type="match status" value="1"/>
</dbReference>
<dbReference type="NCBIfam" id="NF010611">
    <property type="entry name" value="PRK14012.1"/>
    <property type="match status" value="1"/>
</dbReference>
<dbReference type="PANTHER" id="PTHR11601:SF34">
    <property type="entry name" value="CYSTEINE DESULFURASE"/>
    <property type="match status" value="1"/>
</dbReference>
<dbReference type="PANTHER" id="PTHR11601">
    <property type="entry name" value="CYSTEINE DESULFURYLASE FAMILY MEMBER"/>
    <property type="match status" value="1"/>
</dbReference>
<dbReference type="Pfam" id="PF00266">
    <property type="entry name" value="Aminotran_5"/>
    <property type="match status" value="1"/>
</dbReference>
<dbReference type="PIRSF" id="PIRSF005572">
    <property type="entry name" value="NifS"/>
    <property type="match status" value="1"/>
</dbReference>
<dbReference type="SUPFAM" id="SSF53383">
    <property type="entry name" value="PLP-dependent transferases"/>
    <property type="match status" value="1"/>
</dbReference>
<dbReference type="PROSITE" id="PS00595">
    <property type="entry name" value="AA_TRANSFER_CLASS_5"/>
    <property type="match status" value="1"/>
</dbReference>
<evidence type="ECO:0000255" key="1">
    <source>
        <dbReference type="HAMAP-Rule" id="MF_00331"/>
    </source>
</evidence>
<reference key="1">
    <citation type="journal article" date="2004" name="PLoS Biol.">
        <title>Genomic insights into methanotrophy: the complete genome sequence of Methylococcus capsulatus (Bath).</title>
        <authorList>
            <person name="Ward N.L."/>
            <person name="Larsen O."/>
            <person name="Sakwa J."/>
            <person name="Bruseth L."/>
            <person name="Khouri H.M."/>
            <person name="Durkin A.S."/>
            <person name="Dimitrov G."/>
            <person name="Jiang L."/>
            <person name="Scanlan D."/>
            <person name="Kang K.H."/>
            <person name="Lewis M.R."/>
            <person name="Nelson K.E."/>
            <person name="Methe B.A."/>
            <person name="Wu M."/>
            <person name="Heidelberg J.F."/>
            <person name="Paulsen I.T."/>
            <person name="Fouts D.E."/>
            <person name="Ravel J."/>
            <person name="Tettelin H."/>
            <person name="Ren Q."/>
            <person name="Read T.D."/>
            <person name="DeBoy R.T."/>
            <person name="Seshadri R."/>
            <person name="Salzberg S.L."/>
            <person name="Jensen H.B."/>
            <person name="Birkeland N.K."/>
            <person name="Nelson W.C."/>
            <person name="Dodson R.J."/>
            <person name="Grindhaug S.H."/>
            <person name="Holt I.E."/>
            <person name="Eidhammer I."/>
            <person name="Jonasen I."/>
            <person name="Vanaken S."/>
            <person name="Utterback T.R."/>
            <person name="Feldblyum T.V."/>
            <person name="Fraser C.M."/>
            <person name="Lillehaug J.R."/>
            <person name="Eisen J.A."/>
        </authorList>
    </citation>
    <scope>NUCLEOTIDE SEQUENCE [LARGE SCALE GENOMIC DNA]</scope>
    <source>
        <strain>ATCC 33009 / NCIMB 11132 / Bath</strain>
    </source>
</reference>
<proteinExistence type="inferred from homology"/>
<accession>Q60C64</accession>
<sequence length="403" mass="44565">MKLPVYLDYSATTPVDPRVAEKMIPFLTENFGNPASRSHTFGWTAEQAVENAREEVAKLVNADPREIVWTSGATESDNLAIKGAAEFYQTKGRHLITVKTEHKAVLDTMRELESSGFEVTYLEPMANGLLDLDAFRAAIRPDTVLASVMQVNNEIGVIQDIAAIGGICREHGVIFHVDAAQATGKVEIDLEQLPVDLMSFSAHKTYGPKGIGALYVRRKPRIRLKAQMHGGGHERGLRSGTLATHQIVGMGEAFRIAREEMAAENERIRRLRDRLLAGLADMEEVFINGDLEQRVPHNLNISFNYVEGESLMMAIKDLAVSSGSACTSASLEPSYVLRALGRSDELAHSSIRFTLGRYTTAEDVDFAISLIKDKVARLREISPLWEMYKDGIDLNTVQWAAAH</sequence>
<comment type="function">
    <text evidence="1">Master enzyme that delivers sulfur to a number of partners involved in Fe-S cluster assembly, tRNA modification or cofactor biosynthesis. Catalyzes the removal of elemental sulfur atoms from cysteine to produce alanine. Functions as a sulfur delivery protein for Fe-S cluster synthesis onto IscU, an Fe-S scaffold assembly protein, as well as other S acceptor proteins.</text>
</comment>
<comment type="catalytic activity">
    <reaction evidence="1">
        <text>(sulfur carrier)-H + L-cysteine = (sulfur carrier)-SH + L-alanine</text>
        <dbReference type="Rhea" id="RHEA:43892"/>
        <dbReference type="Rhea" id="RHEA-COMP:14737"/>
        <dbReference type="Rhea" id="RHEA-COMP:14739"/>
        <dbReference type="ChEBI" id="CHEBI:29917"/>
        <dbReference type="ChEBI" id="CHEBI:35235"/>
        <dbReference type="ChEBI" id="CHEBI:57972"/>
        <dbReference type="ChEBI" id="CHEBI:64428"/>
        <dbReference type="EC" id="2.8.1.7"/>
    </reaction>
</comment>
<comment type="cofactor">
    <cofactor evidence="1">
        <name>pyridoxal 5'-phosphate</name>
        <dbReference type="ChEBI" id="CHEBI:597326"/>
    </cofactor>
</comment>
<comment type="pathway">
    <text evidence="1">Cofactor biosynthesis; iron-sulfur cluster biosynthesis.</text>
</comment>
<comment type="subunit">
    <text evidence="1">Homodimer. Forms a heterotetramer with IscU, interacts with other sulfur acceptors.</text>
</comment>
<comment type="subcellular location">
    <subcellularLocation>
        <location evidence="1">Cytoplasm</location>
    </subcellularLocation>
</comment>
<comment type="similarity">
    <text evidence="1">Belongs to the class-V pyridoxal-phosphate-dependent aminotransferase family. NifS/IscS subfamily.</text>
</comment>
<protein>
    <recommendedName>
        <fullName evidence="1">Cysteine desulfurase IscS</fullName>
        <ecNumber evidence="1">2.8.1.7</ecNumber>
    </recommendedName>
</protein>
<keyword id="KW-0001">2Fe-2S</keyword>
<keyword id="KW-0963">Cytoplasm</keyword>
<keyword id="KW-0408">Iron</keyword>
<keyword id="KW-0411">Iron-sulfur</keyword>
<keyword id="KW-0479">Metal-binding</keyword>
<keyword id="KW-0663">Pyridoxal phosphate</keyword>
<keyword id="KW-1185">Reference proteome</keyword>
<keyword id="KW-0808">Transferase</keyword>